<sequence>MSKVTSSTLLKYKQEGRKFTALTAYDASFASAFDGEGIDVLLVGDSLGMVLQGHDDTLPVTTADIAYHTRCVRRGIERSLLIADMPFMSYATPEQAMENATALMQAGANMVKLEGGHWLLETVTKLTERGIPVCAHLGLTPQSVHVFGGFKVQGRDAENAQRILDEAKALEAAGAQLLVVECIPESLATAITQALTIPVIGIGAGATTDGQILVMHDVLGISSGYIPRFSKNYLKQTGEIRSAVRAYIEEVANGTFPSSEHTFS</sequence>
<protein>
    <recommendedName>
        <fullName evidence="1">3-methyl-2-oxobutanoate hydroxymethyltransferase</fullName>
        <ecNumber evidence="1">2.1.2.11</ecNumber>
    </recommendedName>
    <alternativeName>
        <fullName evidence="1">Ketopantoate hydroxymethyltransferase</fullName>
        <shortName evidence="1">KPHMT</shortName>
    </alternativeName>
</protein>
<evidence type="ECO:0000255" key="1">
    <source>
        <dbReference type="HAMAP-Rule" id="MF_00156"/>
    </source>
</evidence>
<name>PANB_SHESM</name>
<accession>Q0HMB1</accession>
<reference key="1">
    <citation type="submission" date="2006-08" db="EMBL/GenBank/DDBJ databases">
        <title>Complete sequence of Shewanella sp. MR-4.</title>
        <authorList>
            <consortium name="US DOE Joint Genome Institute"/>
            <person name="Copeland A."/>
            <person name="Lucas S."/>
            <person name="Lapidus A."/>
            <person name="Barry K."/>
            <person name="Detter J.C."/>
            <person name="Glavina del Rio T."/>
            <person name="Hammon N."/>
            <person name="Israni S."/>
            <person name="Dalin E."/>
            <person name="Tice H."/>
            <person name="Pitluck S."/>
            <person name="Kiss H."/>
            <person name="Brettin T."/>
            <person name="Bruce D."/>
            <person name="Han C."/>
            <person name="Tapia R."/>
            <person name="Gilna P."/>
            <person name="Schmutz J."/>
            <person name="Larimer F."/>
            <person name="Land M."/>
            <person name="Hauser L."/>
            <person name="Kyrpides N."/>
            <person name="Mikhailova N."/>
            <person name="Nealson K."/>
            <person name="Konstantinidis K."/>
            <person name="Klappenbach J."/>
            <person name="Tiedje J."/>
            <person name="Richardson P."/>
        </authorList>
    </citation>
    <scope>NUCLEOTIDE SEQUENCE [LARGE SCALE GENOMIC DNA]</scope>
    <source>
        <strain>MR-4</strain>
    </source>
</reference>
<comment type="function">
    <text evidence="1">Catalyzes the reversible reaction in which hydroxymethyl group from 5,10-methylenetetrahydrofolate is transferred onto alpha-ketoisovalerate to form ketopantoate.</text>
</comment>
<comment type="catalytic activity">
    <reaction evidence="1">
        <text>3-methyl-2-oxobutanoate + (6R)-5,10-methylene-5,6,7,8-tetrahydrofolate + H2O = 2-dehydropantoate + (6S)-5,6,7,8-tetrahydrofolate</text>
        <dbReference type="Rhea" id="RHEA:11824"/>
        <dbReference type="ChEBI" id="CHEBI:11561"/>
        <dbReference type="ChEBI" id="CHEBI:11851"/>
        <dbReference type="ChEBI" id="CHEBI:15377"/>
        <dbReference type="ChEBI" id="CHEBI:15636"/>
        <dbReference type="ChEBI" id="CHEBI:57453"/>
        <dbReference type="EC" id="2.1.2.11"/>
    </reaction>
</comment>
<comment type="cofactor">
    <cofactor evidence="1">
        <name>Mg(2+)</name>
        <dbReference type="ChEBI" id="CHEBI:18420"/>
    </cofactor>
    <text evidence="1">Binds 1 Mg(2+) ion per subunit.</text>
</comment>
<comment type="pathway">
    <text evidence="1">Cofactor biosynthesis; (R)-pantothenate biosynthesis; (R)-pantoate from 3-methyl-2-oxobutanoate: step 1/2.</text>
</comment>
<comment type="subunit">
    <text evidence="1">Homodecamer; pentamer of dimers.</text>
</comment>
<comment type="subcellular location">
    <subcellularLocation>
        <location evidence="1">Cytoplasm</location>
    </subcellularLocation>
</comment>
<comment type="similarity">
    <text evidence="1">Belongs to the PanB family.</text>
</comment>
<gene>
    <name evidence="1" type="primary">panB</name>
    <name type="ordered locus">Shewmr4_0726</name>
</gene>
<keyword id="KW-0963">Cytoplasm</keyword>
<keyword id="KW-0460">Magnesium</keyword>
<keyword id="KW-0479">Metal-binding</keyword>
<keyword id="KW-0566">Pantothenate biosynthesis</keyword>
<keyword id="KW-0808">Transferase</keyword>
<proteinExistence type="inferred from homology"/>
<dbReference type="EC" id="2.1.2.11" evidence="1"/>
<dbReference type="EMBL" id="CP000446">
    <property type="protein sequence ID" value="ABI37806.1"/>
    <property type="molecule type" value="Genomic_DNA"/>
</dbReference>
<dbReference type="RefSeq" id="WP_011621523.1">
    <property type="nucleotide sequence ID" value="NC_008321.1"/>
</dbReference>
<dbReference type="SMR" id="Q0HMB1"/>
<dbReference type="KEGG" id="she:Shewmr4_0726"/>
<dbReference type="HOGENOM" id="CLU_036645_1_0_6"/>
<dbReference type="UniPathway" id="UPA00028">
    <property type="reaction ID" value="UER00003"/>
</dbReference>
<dbReference type="GO" id="GO:0005737">
    <property type="term" value="C:cytoplasm"/>
    <property type="evidence" value="ECO:0007669"/>
    <property type="project" value="UniProtKB-SubCell"/>
</dbReference>
<dbReference type="GO" id="GO:0003864">
    <property type="term" value="F:3-methyl-2-oxobutanoate hydroxymethyltransferase activity"/>
    <property type="evidence" value="ECO:0007669"/>
    <property type="project" value="UniProtKB-UniRule"/>
</dbReference>
<dbReference type="GO" id="GO:0000287">
    <property type="term" value="F:magnesium ion binding"/>
    <property type="evidence" value="ECO:0007669"/>
    <property type="project" value="TreeGrafter"/>
</dbReference>
<dbReference type="GO" id="GO:0015940">
    <property type="term" value="P:pantothenate biosynthetic process"/>
    <property type="evidence" value="ECO:0007669"/>
    <property type="project" value="UniProtKB-UniRule"/>
</dbReference>
<dbReference type="CDD" id="cd06557">
    <property type="entry name" value="KPHMT-like"/>
    <property type="match status" value="1"/>
</dbReference>
<dbReference type="FunFam" id="3.20.20.60:FF:000003">
    <property type="entry name" value="3-methyl-2-oxobutanoate hydroxymethyltransferase"/>
    <property type="match status" value="1"/>
</dbReference>
<dbReference type="Gene3D" id="3.20.20.60">
    <property type="entry name" value="Phosphoenolpyruvate-binding domains"/>
    <property type="match status" value="1"/>
</dbReference>
<dbReference type="HAMAP" id="MF_00156">
    <property type="entry name" value="PanB"/>
    <property type="match status" value="1"/>
</dbReference>
<dbReference type="InterPro" id="IPR003700">
    <property type="entry name" value="Pantoate_hydroxy_MeTrfase"/>
</dbReference>
<dbReference type="InterPro" id="IPR015813">
    <property type="entry name" value="Pyrv/PenolPyrv_kinase-like_dom"/>
</dbReference>
<dbReference type="InterPro" id="IPR040442">
    <property type="entry name" value="Pyrv_kinase-like_dom_sf"/>
</dbReference>
<dbReference type="NCBIfam" id="TIGR00222">
    <property type="entry name" value="panB"/>
    <property type="match status" value="1"/>
</dbReference>
<dbReference type="NCBIfam" id="NF001452">
    <property type="entry name" value="PRK00311.1"/>
    <property type="match status" value="1"/>
</dbReference>
<dbReference type="PANTHER" id="PTHR20881">
    <property type="entry name" value="3-METHYL-2-OXOBUTANOATE HYDROXYMETHYLTRANSFERASE"/>
    <property type="match status" value="1"/>
</dbReference>
<dbReference type="PANTHER" id="PTHR20881:SF0">
    <property type="entry name" value="3-METHYL-2-OXOBUTANOATE HYDROXYMETHYLTRANSFERASE"/>
    <property type="match status" value="1"/>
</dbReference>
<dbReference type="Pfam" id="PF02548">
    <property type="entry name" value="Pantoate_transf"/>
    <property type="match status" value="1"/>
</dbReference>
<dbReference type="PIRSF" id="PIRSF000388">
    <property type="entry name" value="Pantoate_hydroxy_MeTrfase"/>
    <property type="match status" value="1"/>
</dbReference>
<dbReference type="SUPFAM" id="SSF51621">
    <property type="entry name" value="Phosphoenolpyruvate/pyruvate domain"/>
    <property type="match status" value="1"/>
</dbReference>
<organism>
    <name type="scientific">Shewanella sp. (strain MR-4)</name>
    <dbReference type="NCBI Taxonomy" id="60480"/>
    <lineage>
        <taxon>Bacteria</taxon>
        <taxon>Pseudomonadati</taxon>
        <taxon>Pseudomonadota</taxon>
        <taxon>Gammaproteobacteria</taxon>
        <taxon>Alteromonadales</taxon>
        <taxon>Shewanellaceae</taxon>
        <taxon>Shewanella</taxon>
    </lineage>
</organism>
<feature type="chain" id="PRO_0000297372" description="3-methyl-2-oxobutanoate hydroxymethyltransferase">
    <location>
        <begin position="1"/>
        <end position="264"/>
    </location>
</feature>
<feature type="active site" description="Proton acceptor" evidence="1">
    <location>
        <position position="181"/>
    </location>
</feature>
<feature type="binding site" evidence="1">
    <location>
        <begin position="45"/>
        <end position="46"/>
    </location>
    <ligand>
        <name>3-methyl-2-oxobutanoate</name>
        <dbReference type="ChEBI" id="CHEBI:11851"/>
    </ligand>
</feature>
<feature type="binding site" evidence="1">
    <location>
        <position position="45"/>
    </location>
    <ligand>
        <name>Mg(2+)</name>
        <dbReference type="ChEBI" id="CHEBI:18420"/>
    </ligand>
</feature>
<feature type="binding site" evidence="1">
    <location>
        <position position="84"/>
    </location>
    <ligand>
        <name>3-methyl-2-oxobutanoate</name>
        <dbReference type="ChEBI" id="CHEBI:11851"/>
    </ligand>
</feature>
<feature type="binding site" evidence="1">
    <location>
        <position position="84"/>
    </location>
    <ligand>
        <name>Mg(2+)</name>
        <dbReference type="ChEBI" id="CHEBI:18420"/>
    </ligand>
</feature>
<feature type="binding site" evidence="1">
    <location>
        <position position="112"/>
    </location>
    <ligand>
        <name>3-methyl-2-oxobutanoate</name>
        <dbReference type="ChEBI" id="CHEBI:11851"/>
    </ligand>
</feature>
<feature type="binding site" evidence="1">
    <location>
        <position position="114"/>
    </location>
    <ligand>
        <name>Mg(2+)</name>
        <dbReference type="ChEBI" id="CHEBI:18420"/>
    </ligand>
</feature>